<protein>
    <recommendedName>
        <fullName evidence="1">Biosynthetic peptidoglycan transglycosylase</fullName>
        <ecNumber evidence="1">2.4.99.28</ecNumber>
    </recommendedName>
    <alternativeName>
        <fullName evidence="1">Glycan polymerase</fullName>
    </alternativeName>
    <alternativeName>
        <fullName evidence="1">Peptidoglycan glycosyltransferase MtgA</fullName>
        <shortName evidence="1">PGT</shortName>
    </alternativeName>
</protein>
<comment type="function">
    <text evidence="1">Peptidoglycan polymerase that catalyzes glycan chain elongation from lipid-linked precursors.</text>
</comment>
<comment type="catalytic activity">
    <reaction evidence="1">
        <text>[GlcNAc-(1-&gt;4)-Mur2Ac(oyl-L-Ala-gamma-D-Glu-L-Lys-D-Ala-D-Ala)](n)-di-trans,octa-cis-undecaprenyl diphosphate + beta-D-GlcNAc-(1-&gt;4)-Mur2Ac(oyl-L-Ala-gamma-D-Glu-L-Lys-D-Ala-D-Ala)-di-trans,octa-cis-undecaprenyl diphosphate = [GlcNAc-(1-&gt;4)-Mur2Ac(oyl-L-Ala-gamma-D-Glu-L-Lys-D-Ala-D-Ala)](n+1)-di-trans,octa-cis-undecaprenyl diphosphate + di-trans,octa-cis-undecaprenyl diphosphate + H(+)</text>
        <dbReference type="Rhea" id="RHEA:23708"/>
        <dbReference type="Rhea" id="RHEA-COMP:9602"/>
        <dbReference type="Rhea" id="RHEA-COMP:9603"/>
        <dbReference type="ChEBI" id="CHEBI:15378"/>
        <dbReference type="ChEBI" id="CHEBI:58405"/>
        <dbReference type="ChEBI" id="CHEBI:60033"/>
        <dbReference type="ChEBI" id="CHEBI:78435"/>
        <dbReference type="EC" id="2.4.99.28"/>
    </reaction>
</comment>
<comment type="pathway">
    <text evidence="1">Cell wall biogenesis; peptidoglycan biosynthesis.</text>
</comment>
<comment type="subcellular location">
    <subcellularLocation>
        <location evidence="1">Cell inner membrane</location>
        <topology evidence="1">Single-pass membrane protein</topology>
    </subcellularLocation>
</comment>
<comment type="similarity">
    <text evidence="1">Belongs to the glycosyltransferase 51 family.</text>
</comment>
<gene>
    <name evidence="1" type="primary">mtgA</name>
    <name type="ordered locus">BAV3005</name>
</gene>
<evidence type="ECO:0000255" key="1">
    <source>
        <dbReference type="HAMAP-Rule" id="MF_00766"/>
    </source>
</evidence>
<reference key="1">
    <citation type="journal article" date="2006" name="J. Bacteriol.">
        <title>Comparison of the genome sequence of the poultry pathogen Bordetella avium with those of B. bronchiseptica, B. pertussis, and B. parapertussis reveals extensive diversity in surface structures associated with host interaction.</title>
        <authorList>
            <person name="Sebaihia M."/>
            <person name="Preston A."/>
            <person name="Maskell D.J."/>
            <person name="Kuzmiak H."/>
            <person name="Connell T.D."/>
            <person name="King N.D."/>
            <person name="Orndorff P.E."/>
            <person name="Miyamoto D.M."/>
            <person name="Thomson N.R."/>
            <person name="Harris D."/>
            <person name="Goble A."/>
            <person name="Lord A."/>
            <person name="Murphy L."/>
            <person name="Quail M.A."/>
            <person name="Rutter S."/>
            <person name="Squares R."/>
            <person name="Squares S."/>
            <person name="Woodward J."/>
            <person name="Parkhill J."/>
            <person name="Temple L.M."/>
        </authorList>
    </citation>
    <scope>NUCLEOTIDE SEQUENCE [LARGE SCALE GENOMIC DNA]</scope>
    <source>
        <strain>197N</strain>
    </source>
</reference>
<sequence>MAASRTRSWLRRTGGVLMALLCLFLIYELAMFSMVVWYAHRDPGSSAIMREEISRLRETDPKAQLSYTWVPYDRINVTLKRAVIASEDANFTEHDGVEWDAIRKAWAYNQNQQAQGRATIRGGSTITQQLAKNLFLSGSRSYLRKGQELILTYMIEHVMSKERILELYLNIAEWGVGIFGAEAAARHYYGISAANLNASQSARLAAMLPNPRYYDKHRSTRYLNSRTAILLRRMRMVDIP</sequence>
<keyword id="KW-0997">Cell inner membrane</keyword>
<keyword id="KW-1003">Cell membrane</keyword>
<keyword id="KW-0133">Cell shape</keyword>
<keyword id="KW-0961">Cell wall biogenesis/degradation</keyword>
<keyword id="KW-0328">Glycosyltransferase</keyword>
<keyword id="KW-0472">Membrane</keyword>
<keyword id="KW-0573">Peptidoglycan synthesis</keyword>
<keyword id="KW-1185">Reference proteome</keyword>
<keyword id="KW-0808">Transferase</keyword>
<keyword id="KW-0812">Transmembrane</keyword>
<keyword id="KW-1133">Transmembrane helix</keyword>
<feature type="chain" id="PRO_0000257658" description="Biosynthetic peptidoglycan transglycosylase">
    <location>
        <begin position="1"/>
        <end position="240"/>
    </location>
</feature>
<feature type="transmembrane region" description="Helical" evidence="1">
    <location>
        <begin position="16"/>
        <end position="36"/>
    </location>
</feature>
<proteinExistence type="inferred from homology"/>
<organism>
    <name type="scientific">Bordetella avium (strain 197N)</name>
    <dbReference type="NCBI Taxonomy" id="360910"/>
    <lineage>
        <taxon>Bacteria</taxon>
        <taxon>Pseudomonadati</taxon>
        <taxon>Pseudomonadota</taxon>
        <taxon>Betaproteobacteria</taxon>
        <taxon>Burkholderiales</taxon>
        <taxon>Alcaligenaceae</taxon>
        <taxon>Bordetella</taxon>
    </lineage>
</organism>
<dbReference type="EC" id="2.4.99.28" evidence="1"/>
<dbReference type="EMBL" id="AM167904">
    <property type="protein sequence ID" value="CAJ50615.1"/>
    <property type="molecule type" value="Genomic_DNA"/>
</dbReference>
<dbReference type="RefSeq" id="WP_012418644.1">
    <property type="nucleotide sequence ID" value="NC_010645.1"/>
</dbReference>
<dbReference type="SMR" id="Q2KUU2"/>
<dbReference type="STRING" id="360910.BAV3005"/>
<dbReference type="CAZy" id="GT51">
    <property type="family name" value="Glycosyltransferase Family 51"/>
</dbReference>
<dbReference type="KEGG" id="bav:BAV3005"/>
<dbReference type="eggNOG" id="COG0744">
    <property type="taxonomic scope" value="Bacteria"/>
</dbReference>
<dbReference type="HOGENOM" id="CLU_006354_1_0_4"/>
<dbReference type="OrthoDB" id="9766909at2"/>
<dbReference type="UniPathway" id="UPA00219"/>
<dbReference type="Proteomes" id="UP000001977">
    <property type="component" value="Chromosome"/>
</dbReference>
<dbReference type="GO" id="GO:0009274">
    <property type="term" value="C:peptidoglycan-based cell wall"/>
    <property type="evidence" value="ECO:0007669"/>
    <property type="project" value="InterPro"/>
</dbReference>
<dbReference type="GO" id="GO:0005886">
    <property type="term" value="C:plasma membrane"/>
    <property type="evidence" value="ECO:0007669"/>
    <property type="project" value="UniProtKB-SubCell"/>
</dbReference>
<dbReference type="GO" id="GO:0016763">
    <property type="term" value="F:pentosyltransferase activity"/>
    <property type="evidence" value="ECO:0007669"/>
    <property type="project" value="InterPro"/>
</dbReference>
<dbReference type="GO" id="GO:0008955">
    <property type="term" value="F:peptidoglycan glycosyltransferase activity"/>
    <property type="evidence" value="ECO:0007669"/>
    <property type="project" value="UniProtKB-UniRule"/>
</dbReference>
<dbReference type="GO" id="GO:0071555">
    <property type="term" value="P:cell wall organization"/>
    <property type="evidence" value="ECO:0007669"/>
    <property type="project" value="UniProtKB-KW"/>
</dbReference>
<dbReference type="GO" id="GO:0009252">
    <property type="term" value="P:peptidoglycan biosynthetic process"/>
    <property type="evidence" value="ECO:0007669"/>
    <property type="project" value="UniProtKB-UniRule"/>
</dbReference>
<dbReference type="GO" id="GO:0008360">
    <property type="term" value="P:regulation of cell shape"/>
    <property type="evidence" value="ECO:0007669"/>
    <property type="project" value="UniProtKB-KW"/>
</dbReference>
<dbReference type="Gene3D" id="1.10.3810.10">
    <property type="entry name" value="Biosynthetic peptidoglycan transglycosylase-like"/>
    <property type="match status" value="1"/>
</dbReference>
<dbReference type="HAMAP" id="MF_00766">
    <property type="entry name" value="PGT_MtgA"/>
    <property type="match status" value="1"/>
</dbReference>
<dbReference type="InterPro" id="IPR001264">
    <property type="entry name" value="Glyco_trans_51"/>
</dbReference>
<dbReference type="InterPro" id="IPR023346">
    <property type="entry name" value="Lysozyme-like_dom_sf"/>
</dbReference>
<dbReference type="InterPro" id="IPR036950">
    <property type="entry name" value="PBP_transglycosylase"/>
</dbReference>
<dbReference type="InterPro" id="IPR011812">
    <property type="entry name" value="Pep_trsgly"/>
</dbReference>
<dbReference type="NCBIfam" id="TIGR02070">
    <property type="entry name" value="mono_pep_trsgly"/>
    <property type="match status" value="1"/>
</dbReference>
<dbReference type="PANTHER" id="PTHR30400:SF0">
    <property type="entry name" value="BIOSYNTHETIC PEPTIDOGLYCAN TRANSGLYCOSYLASE"/>
    <property type="match status" value="1"/>
</dbReference>
<dbReference type="PANTHER" id="PTHR30400">
    <property type="entry name" value="MONOFUNCTIONAL BIOSYNTHETIC PEPTIDOGLYCAN TRANSGLYCOSYLASE"/>
    <property type="match status" value="1"/>
</dbReference>
<dbReference type="Pfam" id="PF00912">
    <property type="entry name" value="Transgly"/>
    <property type="match status" value="1"/>
</dbReference>
<dbReference type="SUPFAM" id="SSF53955">
    <property type="entry name" value="Lysozyme-like"/>
    <property type="match status" value="1"/>
</dbReference>
<name>MTGA_BORA1</name>
<accession>Q2KUU2</accession>